<proteinExistence type="evidence at protein level"/>
<name>XYLE1_PSEPU</name>
<protein>
    <recommendedName>
        <fullName>Metapyrocatechase</fullName>
        <shortName>MPC</shortName>
        <ecNumber>1.13.11.2</ecNumber>
    </recommendedName>
    <alternativeName>
        <fullName>CatO2ase</fullName>
    </alternativeName>
    <alternativeName>
        <fullName>Catechol 2,3-dioxygenase</fullName>
    </alternativeName>
</protein>
<accession>P06622</accession>
<sequence length="307" mass="35156">MNKGVMRPGHVQLRVLDMSKALEHYVELLGLIEMDRDDQGRVYLKAWTEVDKFSLVLREADEPGMDFMGFKVVDEDALRQLERDLMAYGCAVEQLPAGELNSCGRRVRFQAPSGHHFELYADKEYTGKWGLNDVNPEAWPRDLKGMAAVRFDHALMYGDELPATYDLFTKVLGFYLAEQVLDENGTRVAQFLSLSTKAHDVAFIHHPEKGRLHHVSFHLETWEDLLRAADLISMTDTSIDIGPTRHGLTHGKTIYFFDPSGNRNEVFCGGDYNYPDHKPVTWTTDQLGKAIFYHDRILNERFMTVLT</sequence>
<feature type="chain" id="PRO_0000085027" description="Metapyrocatechase">
    <location>
        <begin position="1"/>
        <end position="307"/>
    </location>
</feature>
<feature type="domain" description="VOC 1" evidence="1">
    <location>
        <begin position="7"/>
        <end position="122"/>
    </location>
</feature>
<feature type="domain" description="VOC 2" evidence="1">
    <location>
        <begin position="150"/>
        <end position="269"/>
    </location>
</feature>
<feature type="binding site">
    <location>
        <position position="153"/>
    </location>
    <ligand>
        <name>Fe cation</name>
        <dbReference type="ChEBI" id="CHEBI:24875"/>
    </ligand>
</feature>
<feature type="binding site">
    <location>
        <position position="214"/>
    </location>
    <ligand>
        <name>Fe cation</name>
        <dbReference type="ChEBI" id="CHEBI:24875"/>
    </ligand>
</feature>
<feature type="binding site">
    <location>
        <position position="265"/>
    </location>
    <ligand>
        <name>Fe cation</name>
        <dbReference type="ChEBI" id="CHEBI:24875"/>
    </ligand>
</feature>
<feature type="strand" evidence="3">
    <location>
        <begin position="4"/>
        <end position="16"/>
    </location>
</feature>
<feature type="helix" evidence="3">
    <location>
        <begin position="18"/>
        <end position="27"/>
    </location>
</feature>
<feature type="strand" evidence="3">
    <location>
        <begin position="32"/>
        <end position="36"/>
    </location>
</feature>
<feature type="strand" evidence="3">
    <location>
        <begin position="42"/>
        <end position="45"/>
    </location>
</feature>
<feature type="strand" evidence="3">
    <location>
        <begin position="54"/>
        <end position="59"/>
    </location>
</feature>
<feature type="strand" evidence="3">
    <location>
        <begin position="64"/>
        <end position="73"/>
    </location>
</feature>
<feature type="helix" evidence="3">
    <location>
        <begin position="75"/>
        <end position="88"/>
    </location>
</feature>
<feature type="strand" evidence="3">
    <location>
        <begin position="93"/>
        <end position="95"/>
    </location>
</feature>
<feature type="strand" evidence="3">
    <location>
        <begin position="106"/>
        <end position="110"/>
    </location>
</feature>
<feature type="strand" evidence="3">
    <location>
        <begin position="116"/>
        <end position="121"/>
    </location>
</feature>
<feature type="strand" evidence="3">
    <location>
        <begin position="133"/>
        <end position="135"/>
    </location>
</feature>
<feature type="strand" evidence="3">
    <location>
        <begin position="150"/>
        <end position="159"/>
    </location>
</feature>
<feature type="helix" evidence="3">
    <location>
        <begin position="161"/>
        <end position="170"/>
    </location>
</feature>
<feature type="strand" evidence="3">
    <location>
        <begin position="175"/>
        <end position="181"/>
    </location>
</feature>
<feature type="strand" evidence="3">
    <location>
        <begin position="187"/>
        <end position="198"/>
    </location>
</feature>
<feature type="strand" evidence="3">
    <location>
        <begin position="200"/>
        <end position="205"/>
    </location>
</feature>
<feature type="strand" evidence="3">
    <location>
        <begin position="207"/>
        <end position="218"/>
    </location>
</feature>
<feature type="helix" evidence="3">
    <location>
        <begin position="222"/>
        <end position="235"/>
    </location>
</feature>
<feature type="strand" evidence="3">
    <location>
        <begin position="239"/>
        <end position="245"/>
    </location>
</feature>
<feature type="strand" evidence="3">
    <location>
        <begin position="252"/>
        <end position="257"/>
    </location>
</feature>
<feature type="strand" evidence="3">
    <location>
        <begin position="263"/>
        <end position="268"/>
    </location>
</feature>
<feature type="strand" evidence="3">
    <location>
        <begin position="280"/>
        <end position="283"/>
    </location>
</feature>
<feature type="helix" evidence="3">
    <location>
        <begin position="284"/>
        <end position="286"/>
    </location>
</feature>
<feature type="helix" evidence="3">
    <location>
        <begin position="287"/>
        <end position="291"/>
    </location>
</feature>
<feature type="turn" evidence="3">
    <location>
        <begin position="293"/>
        <end position="295"/>
    </location>
</feature>
<feature type="helix" evidence="3">
    <location>
        <begin position="300"/>
        <end position="303"/>
    </location>
</feature>
<keyword id="KW-0002">3D-structure</keyword>
<keyword id="KW-0058">Aromatic hydrocarbons catabolism</keyword>
<keyword id="KW-0223">Dioxygenase</keyword>
<keyword id="KW-0408">Iron</keyword>
<keyword id="KW-0479">Metal-binding</keyword>
<keyword id="KW-0560">Oxidoreductase</keyword>
<keyword id="KW-0614">Plasmid</keyword>
<keyword id="KW-0677">Repeat</keyword>
<reference key="1">
    <citation type="journal article" date="1983" name="J. Biol. Chem.">
        <title>Complete nucleotide sequence of the metapyrocatechase gene on the TOL plasmid of Pseudomonas putida mt-2.</title>
        <authorList>
            <person name="Nakai C."/>
            <person name="Kagamiyama H."/>
            <person name="Nozaki M."/>
            <person name="Nakzawa T."/>
            <person name="Inouye S."/>
            <person name="Ebina Y."/>
            <person name="Nakazawa A."/>
        </authorList>
    </citation>
    <scope>NUCLEOTIDE SEQUENCE [GENOMIC DNA]</scope>
    <source>
        <strain>ATCC 33015 / DSM 3931 / JCM 6156 / NCIMB 12182 / mt-2</strain>
    </source>
</reference>
<reference key="2">
    <citation type="journal article" date="1983" name="Proc. Natl. Acad. Sci. U.S.A.">
        <title>Chromogenic identification of genetic regulatory signals in Bacillus subtilis based on expression of a cloned Pseudomonas gene.</title>
        <authorList>
            <person name="Zukowski M.M."/>
            <person name="Gaffney D.F."/>
            <person name="Speck D."/>
            <person name="Kauffmann M."/>
            <person name="Findeli A."/>
            <person name="Wisecup A."/>
            <person name="Lecocq J.-P."/>
        </authorList>
    </citation>
    <scope>NUCLEOTIDE SEQUENCE [GENOMIC DNA]</scope>
</reference>
<reference key="3">
    <citation type="submission" date="1983-05" db="EMBL/GenBank/DDBJ databases">
        <authorList>
            <person name="Zukowski M.M."/>
        </authorList>
    </citation>
    <scope>SEQUENCE REVISION</scope>
</reference>
<reference key="4">
    <citation type="journal article" date="1992" name="Eur. J. Biochem.">
        <title>Cis-diol dehydrogenases encoded by the TOL pWW0 plasmid xylL gene and the Acinetobacter calcoaceticus chromosomal benD gene are members of the short-chain alcohol dehydrogenase superfamily.</title>
        <authorList>
            <person name="Neidle E.L."/>
            <person name="Hartnett C."/>
            <person name="Ornston L.N."/>
            <person name="Bairoch A."/>
            <person name="Rekik M."/>
            <person name="Harayama S."/>
        </authorList>
    </citation>
    <scope>NUCLEOTIDE SEQUENCE [GENOMIC DNA]</scope>
</reference>
<reference key="5">
    <citation type="journal article" date="1991" name="Mol. Microbiol.">
        <title>DNA sequence determination of the TOL plasmid (pWWO) xylGFJ genes of Pseudomonas putida: implications for the evolution of aromatic catabolism.</title>
        <authorList>
            <person name="Horn J.M."/>
            <person name="Harayama S."/>
            <person name="Timmis K.N."/>
        </authorList>
    </citation>
    <scope>NUCLEOTIDE SEQUENCE [GENOMIC DNA] OF 284-307</scope>
</reference>
<reference key="6">
    <citation type="journal article" date="1999" name="Structure">
        <title>An archetypical extradiol-cleaving catecholic dioxygenase: the crystal structure of catechol 2,3-dioxygenase (metapyrocatechase) from Ppseudomonas putida mt-2.</title>
        <authorList>
            <person name="Kita A."/>
            <person name="Kita S."/>
            <person name="Fujisawa I."/>
            <person name="Inaka K."/>
            <person name="Ishida T."/>
            <person name="Horiike K."/>
            <person name="Nozaki M."/>
            <person name="Miki K."/>
        </authorList>
    </citation>
    <scope>X-RAY CRYSTALLOGRAPHY (2.8 ANGSTROMS)</scope>
</reference>
<gene>
    <name type="primary">xylE</name>
</gene>
<geneLocation type="plasmid">
    <name>TOL pWW0</name>
</geneLocation>
<comment type="catalytic activity">
    <reaction>
        <text>catechol + O2 = (2Z,4E)-2-hydroxy-6-oxohexa-2,4-dienoate + H(+)</text>
        <dbReference type="Rhea" id="RHEA:17337"/>
        <dbReference type="ChEBI" id="CHEBI:15378"/>
        <dbReference type="ChEBI" id="CHEBI:15379"/>
        <dbReference type="ChEBI" id="CHEBI:18135"/>
        <dbReference type="ChEBI" id="CHEBI:71198"/>
        <dbReference type="EC" id="1.13.11.2"/>
    </reaction>
</comment>
<comment type="cofactor">
    <cofactor>
        <name>Fe(2+)</name>
        <dbReference type="ChEBI" id="CHEBI:29033"/>
    </cofactor>
</comment>
<comment type="pathway">
    <text>Xenobiotic degradation; toluene degradation.</text>
</comment>
<comment type="subunit">
    <text>Homotetramer.</text>
</comment>
<comment type="similarity">
    <text evidence="2">Belongs to the extradiol ring-cleavage dioxygenase family.</text>
</comment>
<evidence type="ECO:0000255" key="1">
    <source>
        <dbReference type="PROSITE-ProRule" id="PRU01163"/>
    </source>
</evidence>
<evidence type="ECO:0000305" key="2"/>
<evidence type="ECO:0007829" key="3">
    <source>
        <dbReference type="PDB" id="1MPY"/>
    </source>
</evidence>
<organism>
    <name type="scientific">Pseudomonas putida</name>
    <name type="common">Arthrobacter siderocapsulatus</name>
    <dbReference type="NCBI Taxonomy" id="303"/>
    <lineage>
        <taxon>Bacteria</taxon>
        <taxon>Pseudomonadati</taxon>
        <taxon>Pseudomonadota</taxon>
        <taxon>Gammaproteobacteria</taxon>
        <taxon>Pseudomonadales</taxon>
        <taxon>Pseudomonadaceae</taxon>
        <taxon>Pseudomonas</taxon>
    </lineage>
</organism>
<dbReference type="EC" id="1.13.11.2"/>
<dbReference type="EMBL" id="V01161">
    <property type="protein sequence ID" value="CAA24490.1"/>
    <property type="molecule type" value="Genomic_DNA"/>
</dbReference>
<dbReference type="EMBL" id="M64747">
    <property type="protein sequence ID" value="AAA26052.1"/>
    <property type="molecule type" value="Genomic_DNA"/>
</dbReference>
<dbReference type="PIR" id="A20852">
    <property type="entry name" value="A20852"/>
</dbReference>
<dbReference type="RefSeq" id="NP_542866.1">
    <property type="nucleotide sequence ID" value="NC_003350.1"/>
</dbReference>
<dbReference type="RefSeq" id="WP_011005909.1">
    <property type="nucleotide sequence ID" value="NZ_LT852425.1"/>
</dbReference>
<dbReference type="PDB" id="1MPY">
    <property type="method" value="X-ray"/>
    <property type="resolution" value="2.80 A"/>
    <property type="chains" value="A/B/C/D=1-307"/>
</dbReference>
<dbReference type="PDBsum" id="1MPY"/>
<dbReference type="SMR" id="P06622"/>
<dbReference type="BioCyc" id="MetaCyc:MONOMER-3421"/>
<dbReference type="BRENDA" id="1.13.11.2">
    <property type="organism ID" value="5092"/>
</dbReference>
<dbReference type="UniPathway" id="UPA00273"/>
<dbReference type="EvolutionaryTrace" id="P06622"/>
<dbReference type="GO" id="GO:0018577">
    <property type="term" value="F:catechol 2,3-dioxygenase activity"/>
    <property type="evidence" value="ECO:0007669"/>
    <property type="project" value="UniProtKB-EC"/>
</dbReference>
<dbReference type="GO" id="GO:0008198">
    <property type="term" value="F:ferrous iron binding"/>
    <property type="evidence" value="ECO:0007669"/>
    <property type="project" value="InterPro"/>
</dbReference>
<dbReference type="GO" id="GO:0042203">
    <property type="term" value="P:toluene catabolic process"/>
    <property type="evidence" value="ECO:0007669"/>
    <property type="project" value="UniProtKB-UniPathway"/>
</dbReference>
<dbReference type="CDD" id="cd07243">
    <property type="entry name" value="2_3_CTD_C"/>
    <property type="match status" value="1"/>
</dbReference>
<dbReference type="CDD" id="cd07265">
    <property type="entry name" value="2_3_CTD_N"/>
    <property type="match status" value="1"/>
</dbReference>
<dbReference type="Gene3D" id="3.10.180.10">
    <property type="entry name" value="2,3-Dihydroxybiphenyl 1,2-Dioxygenase, domain 1"/>
    <property type="match status" value="2"/>
</dbReference>
<dbReference type="InterPro" id="IPR017624">
    <property type="entry name" value="Catechol_2-3_dOase"/>
</dbReference>
<dbReference type="InterPro" id="IPR051332">
    <property type="entry name" value="Fosfomycin_Res_Enzymes"/>
</dbReference>
<dbReference type="InterPro" id="IPR029068">
    <property type="entry name" value="Glyas_Bleomycin-R_OHBP_Dase"/>
</dbReference>
<dbReference type="InterPro" id="IPR004360">
    <property type="entry name" value="Glyas_Fos-R_dOase_dom"/>
</dbReference>
<dbReference type="InterPro" id="IPR037523">
    <property type="entry name" value="VOC"/>
</dbReference>
<dbReference type="InterPro" id="IPR000486">
    <property type="entry name" value="Xdiol_ring_cleave_dOase_1/2"/>
</dbReference>
<dbReference type="InterPro" id="IPR054560">
    <property type="entry name" value="XylE-like_N"/>
</dbReference>
<dbReference type="NCBIfam" id="TIGR03211">
    <property type="entry name" value="catechol_2_3"/>
    <property type="match status" value="1"/>
</dbReference>
<dbReference type="PANTHER" id="PTHR36113:SF6">
    <property type="entry name" value="FOSFOMYCIN RESISTANCE PROTEIN FOSX"/>
    <property type="match status" value="1"/>
</dbReference>
<dbReference type="PANTHER" id="PTHR36113">
    <property type="entry name" value="LYASE, PUTATIVE-RELATED-RELATED"/>
    <property type="match status" value="1"/>
</dbReference>
<dbReference type="Pfam" id="PF22247">
    <property type="entry name" value="Diox-like_N"/>
    <property type="match status" value="1"/>
</dbReference>
<dbReference type="Pfam" id="PF00903">
    <property type="entry name" value="Glyoxalase"/>
    <property type="match status" value="1"/>
</dbReference>
<dbReference type="SUPFAM" id="SSF54593">
    <property type="entry name" value="Glyoxalase/Bleomycin resistance protein/Dihydroxybiphenyl dioxygenase"/>
    <property type="match status" value="1"/>
</dbReference>
<dbReference type="PROSITE" id="PS00082">
    <property type="entry name" value="EXTRADIOL_DIOXYGENAS"/>
    <property type="match status" value="1"/>
</dbReference>
<dbReference type="PROSITE" id="PS51819">
    <property type="entry name" value="VOC"/>
    <property type="match status" value="2"/>
</dbReference>